<protein>
    <recommendedName>
        <fullName>Formyltransferase/hydrolase complex Fhc subunit B</fullName>
    </recommendedName>
</protein>
<keyword id="KW-0963">Cytoplasm</keyword>
<keyword id="KW-0903">Direct protein sequencing</keyword>
<keyword id="KW-0554">One-carbon metabolism</keyword>
<keyword id="KW-1185">Reference proteome</keyword>
<feature type="initiator methionine" description="Removed" evidence="2">
    <location>
        <position position="1"/>
    </location>
</feature>
<feature type="chain" id="PRO_0000421572" description="Formyltransferase/hydrolase complex Fhc subunit B">
    <location>
        <begin position="2"/>
        <end position="362"/>
    </location>
</feature>
<comment type="function">
    <text evidence="2 3">Involved in the transformation of 5-formyl tetrahydromethanopterin (5-formyl-H(4)MPT) to methanofuran (MFR) and formate via the formylmethanofuran (formyl-MFR).</text>
</comment>
<comment type="pathway">
    <text>One-carbon metabolism; formaldehyde degradation; formate from formaldehyde (H(4)MPT route): step 4/5.</text>
</comment>
<comment type="subunit">
    <text evidence="2">Octaheteromer. Part of the formyltransferase/hydrolase complex fhc; composed of FhcA, FhcB, FhcC and FhcD.</text>
</comment>
<comment type="subcellular location">
    <subcellularLocation>
        <location evidence="1">Cytoplasm</location>
    </subcellularLocation>
</comment>
<comment type="miscellaneous">
    <text evidence="4">Although FhcB and FhcC do not possess a formylMFR dehydrogenase (Fmd) activity and have an unknown function, they are required for the stability of the complex.</text>
</comment>
<proteinExistence type="evidence at protein level"/>
<name>FHCB_METEA</name>
<reference key="1">
    <citation type="journal article" date="2009" name="PLoS ONE">
        <title>Methylobacterium genome sequences: a reference blueprint to investigate microbial metabolism of C1 compounds from natural and industrial sources.</title>
        <authorList>
            <person name="Vuilleumier S."/>
            <person name="Chistoserdova L."/>
            <person name="Lee M.-C."/>
            <person name="Bringel F."/>
            <person name="Lajus A."/>
            <person name="Zhou Y."/>
            <person name="Gourion B."/>
            <person name="Barbe V."/>
            <person name="Chang J."/>
            <person name="Cruveiller S."/>
            <person name="Dossat C."/>
            <person name="Gillett W."/>
            <person name="Gruffaz C."/>
            <person name="Haugen E."/>
            <person name="Hourcade E."/>
            <person name="Levy R."/>
            <person name="Mangenot S."/>
            <person name="Muller E."/>
            <person name="Nadalig T."/>
            <person name="Pagni M."/>
            <person name="Penny C."/>
            <person name="Peyraud R."/>
            <person name="Robinson D.G."/>
            <person name="Roche D."/>
            <person name="Rouy Z."/>
            <person name="Saenampechek C."/>
            <person name="Salvignol G."/>
            <person name="Vallenet D."/>
            <person name="Wu Z."/>
            <person name="Marx C.J."/>
            <person name="Vorholt J.A."/>
            <person name="Olson M.V."/>
            <person name="Kaul R."/>
            <person name="Weissenbach J."/>
            <person name="Medigue C."/>
            <person name="Lidstrom M.E."/>
        </authorList>
    </citation>
    <scope>NUCLEOTIDE SEQUENCE [LARGE SCALE GENOMIC DNA]</scope>
    <source>
        <strain>ATCC 14718 / DSM 1338 / JCM 2805 / NCIMB 9133 / AM1</strain>
    </source>
</reference>
<reference key="2">
    <citation type="journal article" date="2001" name="Eur. J. Biochem.">
        <title>Characterization of the formyltransferase from Methylobacterium extorquens AM1.</title>
        <authorList>
            <person name="Pomper B.K."/>
            <person name="Vorholt J.A."/>
        </authorList>
    </citation>
    <scope>PROTEIN SEQUENCE OF 2-16</scope>
    <scope>FUNCTION IN FORMALDEHYDE DEGRADATION</scope>
    <scope>SUBUNIT</scope>
</reference>
<reference key="3">
    <citation type="journal article" date="2002" name="FEBS Lett.">
        <title>Generation of formate by the formyltransferase/hydrolase complex (Fhc) from Methylobacterium extorquens AM1.</title>
        <authorList>
            <person name="Pomper B.K."/>
            <person name="Saurel O."/>
            <person name="Milon A."/>
            <person name="Vorholt J.A."/>
        </authorList>
    </citation>
    <scope>FUNCTION</scope>
</reference>
<organism>
    <name type="scientific">Methylorubrum extorquens (strain ATCC 14718 / DSM 1338 / JCM 2805 / NCIMB 9133 / AM1)</name>
    <name type="common">Methylobacterium extorquens</name>
    <dbReference type="NCBI Taxonomy" id="272630"/>
    <lineage>
        <taxon>Bacteria</taxon>
        <taxon>Pseudomonadati</taxon>
        <taxon>Pseudomonadota</taxon>
        <taxon>Alphaproteobacteria</taxon>
        <taxon>Hyphomicrobiales</taxon>
        <taxon>Methylobacteriaceae</taxon>
        <taxon>Methylorubrum</taxon>
    </lineage>
</organism>
<gene>
    <name type="primary">fhcB</name>
    <name type="ordered locus">MexAM1_META1p1758</name>
</gene>
<dbReference type="EMBL" id="CP001510">
    <property type="protein sequence ID" value="ACS39602.1"/>
    <property type="molecule type" value="Genomic_DNA"/>
</dbReference>
<dbReference type="RefSeq" id="WP_012752614.1">
    <property type="nucleotide sequence ID" value="NC_012808.1"/>
</dbReference>
<dbReference type="SMR" id="C5B138"/>
<dbReference type="STRING" id="272630.MexAM1_META1p1758"/>
<dbReference type="KEGG" id="mea:Mex_1p1758"/>
<dbReference type="eggNOG" id="COG1029">
    <property type="taxonomic scope" value="Bacteria"/>
</dbReference>
<dbReference type="HOGENOM" id="CLU_034348_1_0_5"/>
<dbReference type="OrthoDB" id="7914675at2"/>
<dbReference type="UniPathway" id="UPA00562">
    <property type="reaction ID" value="UER00704"/>
</dbReference>
<dbReference type="Proteomes" id="UP000009081">
    <property type="component" value="Chromosome"/>
</dbReference>
<dbReference type="GO" id="GO:0005737">
    <property type="term" value="C:cytoplasm"/>
    <property type="evidence" value="ECO:0007669"/>
    <property type="project" value="UniProtKB-SubCell"/>
</dbReference>
<dbReference type="GO" id="GO:0046294">
    <property type="term" value="P:formaldehyde catabolic process"/>
    <property type="evidence" value="ECO:0007669"/>
    <property type="project" value="UniProtKB-UniPathway"/>
</dbReference>
<dbReference type="GO" id="GO:0006730">
    <property type="term" value="P:one-carbon metabolic process"/>
    <property type="evidence" value="ECO:0000314"/>
    <property type="project" value="UniProtKB"/>
</dbReference>
<dbReference type="Gene3D" id="3.40.50.1220">
    <property type="entry name" value="TPP-binding domain"/>
    <property type="match status" value="1"/>
</dbReference>
<evidence type="ECO:0000250" key="1"/>
<evidence type="ECO:0000269" key="2">
    <source>
    </source>
</evidence>
<evidence type="ECO:0000269" key="3">
    <source>
    </source>
</evidence>
<evidence type="ECO:0000305" key="4">
    <source>
    </source>
</evidence>
<accession>C5B138</accession>
<sequence>MAAWVKGGAADVDAAVEAAADLLAASRVPVLAGLSAEVSALRAAYRLAETLGASLDPVSGPSVYAELGALSAGGAMSTTRAETIGRADVILIVGNRPWDGELIAEIAAAAPSRGRAAGSERALLSLGGPQNGAIRHVAYAADAGGLTISLGHLRAFAKGHLAGEAAFADLAKRLFAAQYGVIVYDPEEVGELGAEMLQGLIRDLNESTRFFALTLADPFQGRAAVQLSAWTTGQAPRVGFGRHQPEHDSWRFDSARQIAAGEADAALWLASLPAPRPAWLGSLPTIAIVGEGSQEAAGETAEVVITVGVPGQSVGGALWNDRRGVIAYAEASDPAKTPAETETAAGVLTRIRDRLIEKGVSC</sequence>